<feature type="chain" id="PRO_0000419481" description="MMS19 nucleotide excision repair protein homolog">
    <location>
        <begin position="1"/>
        <end position="1043"/>
    </location>
</feature>
<feature type="repeat" description="HEAT 1">
    <location>
        <begin position="879"/>
        <end position="917"/>
    </location>
</feature>
<feature type="repeat" description="HEAT 2">
    <location>
        <begin position="921"/>
        <end position="959"/>
    </location>
</feature>
<feature type="repeat" description="HEAT 3">
    <location>
        <begin position="962"/>
        <end position="1000"/>
    </location>
</feature>
<feature type="repeat" description="HEAT 4">
    <location>
        <begin position="1003"/>
        <end position="1041"/>
    </location>
</feature>
<sequence length="1043" mass="113550">MAADNNVLLGLVEEFVSGQVDSKAADTSTGVKNGQFTVLQLVEALGVSLTSSQPQTRGRGVQLLSQVLQECYSGLSEREVEVLIAFYENRLKDHYVITPHVLRGLKALAKCSVLPPGSAVSILKSIFQDVHVQQQSLMVTERSCVYNILISLMESREEELKGLGADFIFGFVQSVDGERDPRNLLLAFQVAKNIIYRGYDLGKFVEELFEVTSCYFPIDFSPPPNDPHGITQEELILSLRAVLTGTPRFAEFLLPLIIEKMDSDVQSAKVDSMHTLAACGQTYSHKELAEFLPGLWSSIRREVFQTASERVESAGLSALSSLVSCLSRSVLNSDSEDSLQVFLNLVLKSDCQHHLCEPDLKLVWPSAKLLQAAAGASYRASLIGTQAVIPALLDQYNNRTQCAQRRTLLEVLQGFVQPTPLSRPADGVSCISTHTHEEESVLVAFQQSLCTVVFSALSETSAGLQVTATRVLTALSQQPGLLSQTDVENAVDHLTRLILEEEEAQVSLAVVECSGSLAHLHPHAFVSRMIPQLKEKILSGRVHTVMEKTLSGSLYECSGAVRRRCVAALASVSSQPSVVQESSPVLLQVLTSAHTGCCGFSVEEVIAVCISLQRIAVHARDNEAIGQFFHDIIIPRLLGLTLQAALQSKDSGHISPLTDEAVLSAIVPVISTACAALKPESASRMAAQAVSLFLDGDTSFLPENAFPSQIQPLQSQADSRGPSQLVCLLMACVCSLPRSVEIPDMDRLLVQLEDLSCTSPHLFSYTFASKCIAGLVNKRPAGAALNAVLDRVLKRVSLELEETSSTHRTQAFTLLIWVAKALLLRYHPLSTALTDKLFSLLSDSALGSLVADGFCVLMNDSPDVLNRDCHADVRIMYRQRFFTENSSKLVQGFNSAEQAKKSCYLKALSHIVNNLPREVQLTELPALLPLLLEALSCVDQGVQLSTLSCLQPVLLESPAALNTQLEALFTRLLALTTSPAMKVRMASLRCVHALSRLPEHMVMPFRARVLKALAAPLDDKKRLVRKEAVAARGEWFLLGSPGG</sequence>
<organism>
    <name type="scientific">Danio rerio</name>
    <name type="common">Zebrafish</name>
    <name type="synonym">Brachydanio rerio</name>
    <dbReference type="NCBI Taxonomy" id="7955"/>
    <lineage>
        <taxon>Eukaryota</taxon>
        <taxon>Metazoa</taxon>
        <taxon>Chordata</taxon>
        <taxon>Craniata</taxon>
        <taxon>Vertebrata</taxon>
        <taxon>Euteleostomi</taxon>
        <taxon>Actinopterygii</taxon>
        <taxon>Neopterygii</taxon>
        <taxon>Teleostei</taxon>
        <taxon>Ostariophysi</taxon>
        <taxon>Cypriniformes</taxon>
        <taxon>Danionidae</taxon>
        <taxon>Danioninae</taxon>
        <taxon>Danio</taxon>
    </lineage>
</organism>
<protein>
    <recommendedName>
        <fullName>MMS19 nucleotide excision repair protein homolog</fullName>
    </recommendedName>
    <alternativeName>
        <fullName>MMS19-like protein</fullName>
    </alternativeName>
</protein>
<name>MMS19_DANRE</name>
<reference key="1">
    <citation type="journal article" date="2013" name="Nature">
        <title>The zebrafish reference genome sequence and its relationship to the human genome.</title>
        <authorList>
            <person name="Howe K."/>
            <person name="Clark M.D."/>
            <person name="Torroja C.F."/>
            <person name="Torrance J."/>
            <person name="Berthelot C."/>
            <person name="Muffato M."/>
            <person name="Collins J.E."/>
            <person name="Humphray S."/>
            <person name="McLaren K."/>
            <person name="Matthews L."/>
            <person name="McLaren S."/>
            <person name="Sealy I."/>
            <person name="Caccamo M."/>
            <person name="Churcher C."/>
            <person name="Scott C."/>
            <person name="Barrett J.C."/>
            <person name="Koch R."/>
            <person name="Rauch G.J."/>
            <person name="White S."/>
            <person name="Chow W."/>
            <person name="Kilian B."/>
            <person name="Quintais L.T."/>
            <person name="Guerra-Assuncao J.A."/>
            <person name="Zhou Y."/>
            <person name="Gu Y."/>
            <person name="Yen J."/>
            <person name="Vogel J.H."/>
            <person name="Eyre T."/>
            <person name="Redmond S."/>
            <person name="Banerjee R."/>
            <person name="Chi J."/>
            <person name="Fu B."/>
            <person name="Langley E."/>
            <person name="Maguire S.F."/>
            <person name="Laird G.K."/>
            <person name="Lloyd D."/>
            <person name="Kenyon E."/>
            <person name="Donaldson S."/>
            <person name="Sehra H."/>
            <person name="Almeida-King J."/>
            <person name="Loveland J."/>
            <person name="Trevanion S."/>
            <person name="Jones M."/>
            <person name="Quail M."/>
            <person name="Willey D."/>
            <person name="Hunt A."/>
            <person name="Burton J."/>
            <person name="Sims S."/>
            <person name="McLay K."/>
            <person name="Plumb B."/>
            <person name="Davis J."/>
            <person name="Clee C."/>
            <person name="Oliver K."/>
            <person name="Clark R."/>
            <person name="Riddle C."/>
            <person name="Elliot D."/>
            <person name="Threadgold G."/>
            <person name="Harden G."/>
            <person name="Ware D."/>
            <person name="Begum S."/>
            <person name="Mortimore B."/>
            <person name="Kerry G."/>
            <person name="Heath P."/>
            <person name="Phillimore B."/>
            <person name="Tracey A."/>
            <person name="Corby N."/>
            <person name="Dunn M."/>
            <person name="Johnson C."/>
            <person name="Wood J."/>
            <person name="Clark S."/>
            <person name="Pelan S."/>
            <person name="Griffiths G."/>
            <person name="Smith M."/>
            <person name="Glithero R."/>
            <person name="Howden P."/>
            <person name="Barker N."/>
            <person name="Lloyd C."/>
            <person name="Stevens C."/>
            <person name="Harley J."/>
            <person name="Holt K."/>
            <person name="Panagiotidis G."/>
            <person name="Lovell J."/>
            <person name="Beasley H."/>
            <person name="Henderson C."/>
            <person name="Gordon D."/>
            <person name="Auger K."/>
            <person name="Wright D."/>
            <person name="Collins J."/>
            <person name="Raisen C."/>
            <person name="Dyer L."/>
            <person name="Leung K."/>
            <person name="Robertson L."/>
            <person name="Ambridge K."/>
            <person name="Leongamornlert D."/>
            <person name="McGuire S."/>
            <person name="Gilderthorp R."/>
            <person name="Griffiths C."/>
            <person name="Manthravadi D."/>
            <person name="Nichol S."/>
            <person name="Barker G."/>
            <person name="Whitehead S."/>
            <person name="Kay M."/>
            <person name="Brown J."/>
            <person name="Murnane C."/>
            <person name="Gray E."/>
            <person name="Humphries M."/>
            <person name="Sycamore N."/>
            <person name="Barker D."/>
            <person name="Saunders D."/>
            <person name="Wallis J."/>
            <person name="Babbage A."/>
            <person name="Hammond S."/>
            <person name="Mashreghi-Mohammadi M."/>
            <person name="Barr L."/>
            <person name="Martin S."/>
            <person name="Wray P."/>
            <person name="Ellington A."/>
            <person name="Matthews N."/>
            <person name="Ellwood M."/>
            <person name="Woodmansey R."/>
            <person name="Clark G."/>
            <person name="Cooper J."/>
            <person name="Tromans A."/>
            <person name="Grafham D."/>
            <person name="Skuce C."/>
            <person name="Pandian R."/>
            <person name="Andrews R."/>
            <person name="Harrison E."/>
            <person name="Kimberley A."/>
            <person name="Garnett J."/>
            <person name="Fosker N."/>
            <person name="Hall R."/>
            <person name="Garner P."/>
            <person name="Kelly D."/>
            <person name="Bird C."/>
            <person name="Palmer S."/>
            <person name="Gehring I."/>
            <person name="Berger A."/>
            <person name="Dooley C.M."/>
            <person name="Ersan-Urun Z."/>
            <person name="Eser C."/>
            <person name="Geiger H."/>
            <person name="Geisler M."/>
            <person name="Karotki L."/>
            <person name="Kirn A."/>
            <person name="Konantz J."/>
            <person name="Konantz M."/>
            <person name="Oberlander M."/>
            <person name="Rudolph-Geiger S."/>
            <person name="Teucke M."/>
            <person name="Lanz C."/>
            <person name="Raddatz G."/>
            <person name="Osoegawa K."/>
            <person name="Zhu B."/>
            <person name="Rapp A."/>
            <person name="Widaa S."/>
            <person name="Langford C."/>
            <person name="Yang F."/>
            <person name="Schuster S.C."/>
            <person name="Carter N.P."/>
            <person name="Harrow J."/>
            <person name="Ning Z."/>
            <person name="Herrero J."/>
            <person name="Searle S.M."/>
            <person name="Enright A."/>
            <person name="Geisler R."/>
            <person name="Plasterk R.H."/>
            <person name="Lee C."/>
            <person name="Westerfield M."/>
            <person name="de Jong P.J."/>
            <person name="Zon L.I."/>
            <person name="Postlethwait J.H."/>
            <person name="Nusslein-Volhard C."/>
            <person name="Hubbard T.J."/>
            <person name="Roest Crollius H."/>
            <person name="Rogers J."/>
            <person name="Stemple D.L."/>
        </authorList>
    </citation>
    <scope>NUCLEOTIDE SEQUENCE [LARGE SCALE GENOMIC DNA]</scope>
    <source>
        <strain>Tuebingen</strain>
    </source>
</reference>
<gene>
    <name type="primary">mms19</name>
</gene>
<dbReference type="EMBL" id="CU459170">
    <property type="status" value="NOT_ANNOTATED_CDS"/>
    <property type="molecule type" value="Genomic_DNA"/>
</dbReference>
<dbReference type="EMBL" id="CU459184">
    <property type="status" value="NOT_ANNOTATED_CDS"/>
    <property type="molecule type" value="Genomic_DNA"/>
</dbReference>
<dbReference type="SMR" id="E7FBU4"/>
<dbReference type="FunCoup" id="E7FBU4">
    <property type="interactions" value="2227"/>
</dbReference>
<dbReference type="STRING" id="7955.ENSDARP00000126941"/>
<dbReference type="PaxDb" id="7955-ENSDARP00000098600"/>
<dbReference type="PeptideAtlas" id="E7FBU4"/>
<dbReference type="AGR" id="ZFIN:ZDB-GENE-120316-2"/>
<dbReference type="ZFIN" id="ZDB-GENE-120316-2">
    <property type="gene designation" value="mms19"/>
</dbReference>
<dbReference type="eggNOG" id="KOG1967">
    <property type="taxonomic scope" value="Eukaryota"/>
</dbReference>
<dbReference type="InParanoid" id="E7FBU4"/>
<dbReference type="PhylomeDB" id="E7FBU4"/>
<dbReference type="TreeFam" id="TF314469"/>
<dbReference type="PRO" id="PR:E7FBU4"/>
<dbReference type="Proteomes" id="UP000000437">
    <property type="component" value="Unplaced"/>
</dbReference>
<dbReference type="GO" id="GO:0005737">
    <property type="term" value="C:cytoplasm"/>
    <property type="evidence" value="ECO:0000250"/>
    <property type="project" value="UniProtKB"/>
</dbReference>
<dbReference type="GO" id="GO:0097361">
    <property type="term" value="C:cytosolic [4Fe-4S] assembly targeting complex"/>
    <property type="evidence" value="ECO:0000250"/>
    <property type="project" value="UniProtKB"/>
</dbReference>
<dbReference type="GO" id="GO:0071817">
    <property type="term" value="C:MMXD complex"/>
    <property type="evidence" value="ECO:0000318"/>
    <property type="project" value="GO_Central"/>
</dbReference>
<dbReference type="GO" id="GO:0005634">
    <property type="term" value="C:nucleus"/>
    <property type="evidence" value="ECO:0007669"/>
    <property type="project" value="UniProtKB-SubCell"/>
</dbReference>
<dbReference type="GO" id="GO:0006281">
    <property type="term" value="P:DNA repair"/>
    <property type="evidence" value="ECO:0007669"/>
    <property type="project" value="UniProtKB-KW"/>
</dbReference>
<dbReference type="GO" id="GO:0051604">
    <property type="term" value="P:protein maturation"/>
    <property type="evidence" value="ECO:0000250"/>
    <property type="project" value="UniProtKB"/>
</dbReference>
<dbReference type="FunFam" id="1.25.10.10:FF:000114">
    <property type="entry name" value="MMS19 nucleotide excision repair protein homolog isoform X2"/>
    <property type="match status" value="1"/>
</dbReference>
<dbReference type="Gene3D" id="1.25.10.10">
    <property type="entry name" value="Leucine-rich Repeat Variant"/>
    <property type="match status" value="2"/>
</dbReference>
<dbReference type="InterPro" id="IPR011989">
    <property type="entry name" value="ARM-like"/>
</dbReference>
<dbReference type="InterPro" id="IPR016024">
    <property type="entry name" value="ARM-type_fold"/>
</dbReference>
<dbReference type="InterPro" id="IPR039920">
    <property type="entry name" value="MMS19"/>
</dbReference>
<dbReference type="InterPro" id="IPR024687">
    <property type="entry name" value="MMS19_C"/>
</dbReference>
<dbReference type="InterPro" id="IPR029240">
    <property type="entry name" value="MMS19_N"/>
</dbReference>
<dbReference type="PANTHER" id="PTHR12891">
    <property type="entry name" value="DNA REPAIR/TRANSCRIPTION PROTEIN MET18/MMS19"/>
    <property type="match status" value="1"/>
</dbReference>
<dbReference type="PANTHER" id="PTHR12891:SF0">
    <property type="entry name" value="MMS19 NUCLEOTIDE EXCISION REPAIR PROTEIN HOMOLOG"/>
    <property type="match status" value="1"/>
</dbReference>
<dbReference type="Pfam" id="PF12460">
    <property type="entry name" value="MMS19_C"/>
    <property type="match status" value="1"/>
</dbReference>
<dbReference type="Pfam" id="PF14500">
    <property type="entry name" value="MMS19_N"/>
    <property type="match status" value="1"/>
</dbReference>
<dbReference type="SUPFAM" id="SSF48371">
    <property type="entry name" value="ARM repeat"/>
    <property type="match status" value="2"/>
</dbReference>
<comment type="function">
    <text evidence="1">Key component of the cytosolic iron-sulfur protein assembly (CIA) complex, a multiprotein complex that mediates the incorporation of iron-sulfur cluster into apoproteins specifically involved in DNA metabolism and genomic integrity. In the CIA complex, MMS19 acts as an adapter between early-acting CIA components and a subset of cellular target iron-sulfur proteins (By similarity).</text>
</comment>
<comment type="subunit">
    <text evidence="1">Component of the CIA complex.</text>
</comment>
<comment type="subcellular location">
    <subcellularLocation>
        <location evidence="1">Nucleus</location>
    </subcellularLocation>
    <subcellularLocation>
        <location evidence="1">Cytoplasm</location>
        <location evidence="1">Cytoskeleton</location>
        <location evidence="1">Spindle</location>
    </subcellularLocation>
</comment>
<comment type="similarity">
    <text evidence="2">Belongs to the MET18/MMS19 family.</text>
</comment>
<evidence type="ECO:0000250" key="1">
    <source>
        <dbReference type="UniProtKB" id="Q96T76"/>
    </source>
</evidence>
<evidence type="ECO:0000305" key="2"/>
<accession>E7FBU4</accession>
<proteinExistence type="inferred from homology"/>
<keyword id="KW-0963">Cytoplasm</keyword>
<keyword id="KW-0206">Cytoskeleton</keyword>
<keyword id="KW-0227">DNA damage</keyword>
<keyword id="KW-0234">DNA repair</keyword>
<keyword id="KW-0539">Nucleus</keyword>
<keyword id="KW-1185">Reference proteome</keyword>
<keyword id="KW-0677">Repeat</keyword>